<sequence length="125" mass="12823">MACPSLACCLLGLLALTSACYIQNCPLGGKRAALDLDMRKCLPCGPGGKGRCFGPSICCADELGCFVGTAEALRCQEENYLPSPCQSGQKPCGSGGRCATAGICCSPDGCRTDPACDPESAFSER</sequence>
<accession>P01179</accession>
<accession>Q53WU2</accession>
<name>NEU1_RAT</name>
<organism>
    <name type="scientific">Rattus norvegicus</name>
    <name type="common">Rat</name>
    <dbReference type="NCBI Taxonomy" id="10116"/>
    <lineage>
        <taxon>Eukaryota</taxon>
        <taxon>Metazoa</taxon>
        <taxon>Chordata</taxon>
        <taxon>Craniata</taxon>
        <taxon>Vertebrata</taxon>
        <taxon>Euteleostomi</taxon>
        <taxon>Mammalia</taxon>
        <taxon>Eutheria</taxon>
        <taxon>Euarchontoglires</taxon>
        <taxon>Glires</taxon>
        <taxon>Rodentia</taxon>
        <taxon>Myomorpha</taxon>
        <taxon>Muroidea</taxon>
        <taxon>Muridae</taxon>
        <taxon>Murinae</taxon>
        <taxon>Rattus</taxon>
    </lineage>
</organism>
<dbReference type="EMBL" id="K01701">
    <property type="protein sequence ID" value="AAA98733.1"/>
    <property type="molecule type" value="Genomic_DNA"/>
</dbReference>
<dbReference type="EMBL" id="M25649">
    <property type="protein sequence ID" value="AAA41773.1"/>
    <property type="molecule type" value="mRNA"/>
</dbReference>
<dbReference type="EMBL" id="X12792">
    <property type="protein sequence ID" value="CAA31281.1"/>
    <property type="molecule type" value="Genomic_DNA"/>
</dbReference>
<dbReference type="EMBL" id="X59496">
    <property type="protein sequence ID" value="CAA42085.1"/>
    <property type="molecule type" value="Genomic_DNA"/>
</dbReference>
<dbReference type="PIR" id="A21183">
    <property type="entry name" value="NFRT1"/>
</dbReference>
<dbReference type="RefSeq" id="NP_037128.1">
    <property type="nucleotide sequence ID" value="NM_012996.3"/>
</dbReference>
<dbReference type="SMR" id="P01179"/>
<dbReference type="FunCoup" id="P01179">
    <property type="interactions" value="188"/>
</dbReference>
<dbReference type="STRING" id="10116.ENSRNOP00000028829"/>
<dbReference type="PaxDb" id="10116-ENSRNOP00000028829"/>
<dbReference type="DNASU" id="25504"/>
<dbReference type="Ensembl" id="ENSRNOT00000028829.6">
    <property type="protein sequence ID" value="ENSRNOP00000028829.3"/>
    <property type="gene ID" value="ENSRNOG00000021225.6"/>
</dbReference>
<dbReference type="GeneID" id="25504"/>
<dbReference type="KEGG" id="rno:25504"/>
<dbReference type="UCSC" id="RGD:3238">
    <property type="organism name" value="rat"/>
</dbReference>
<dbReference type="AGR" id="RGD:3238"/>
<dbReference type="CTD" id="5020"/>
<dbReference type="RGD" id="3238">
    <property type="gene designation" value="Oxt"/>
</dbReference>
<dbReference type="eggNOG" id="ENOG502S2CT">
    <property type="taxonomic scope" value="Eukaryota"/>
</dbReference>
<dbReference type="GeneTree" id="ENSGT00390000004511"/>
<dbReference type="HOGENOM" id="CLU_125770_1_0_1"/>
<dbReference type="InParanoid" id="P01179"/>
<dbReference type="OMA" id="ACVINDP"/>
<dbReference type="OrthoDB" id="10056056at2759"/>
<dbReference type="PhylomeDB" id="P01179"/>
<dbReference type="TreeFam" id="TF333018"/>
<dbReference type="Reactome" id="R-RNO-388479">
    <property type="pathway name" value="Vasopressin-like receptors"/>
</dbReference>
<dbReference type="Reactome" id="R-RNO-416476">
    <property type="pathway name" value="G alpha (q) signalling events"/>
</dbReference>
<dbReference type="PRO" id="PR:P01179"/>
<dbReference type="Proteomes" id="UP000002494">
    <property type="component" value="Chromosome 3"/>
</dbReference>
<dbReference type="Bgee" id="ENSRNOG00000021225">
    <property type="expression patterns" value="Expressed in ovary and 1 other cell type or tissue"/>
</dbReference>
<dbReference type="GO" id="GO:0005737">
    <property type="term" value="C:cytoplasm"/>
    <property type="evidence" value="ECO:0000266"/>
    <property type="project" value="RGD"/>
</dbReference>
<dbReference type="GO" id="GO:0005576">
    <property type="term" value="C:extracellular region"/>
    <property type="evidence" value="ECO:0000266"/>
    <property type="project" value="RGD"/>
</dbReference>
<dbReference type="GO" id="GO:0005615">
    <property type="term" value="C:extracellular space"/>
    <property type="evidence" value="ECO:0000314"/>
    <property type="project" value="RGD"/>
</dbReference>
<dbReference type="GO" id="GO:0098992">
    <property type="term" value="C:neuronal dense core vesicle"/>
    <property type="evidence" value="ECO:0000314"/>
    <property type="project" value="SynGO"/>
</dbReference>
<dbReference type="GO" id="GO:0030141">
    <property type="term" value="C:secretory granule"/>
    <property type="evidence" value="ECO:0000314"/>
    <property type="project" value="RGD"/>
</dbReference>
<dbReference type="GO" id="GO:0043195">
    <property type="term" value="C:terminal bouton"/>
    <property type="evidence" value="ECO:0000314"/>
    <property type="project" value="RGD"/>
</dbReference>
<dbReference type="GO" id="GO:0005185">
    <property type="term" value="F:neurohypophyseal hormone activity"/>
    <property type="evidence" value="ECO:0007669"/>
    <property type="project" value="InterPro"/>
</dbReference>
<dbReference type="GO" id="GO:0005184">
    <property type="term" value="F:neuropeptide hormone activity"/>
    <property type="evidence" value="ECO:0000314"/>
    <property type="project" value="RGD"/>
</dbReference>
<dbReference type="GO" id="GO:0031855">
    <property type="term" value="F:oxytocin receptor binding"/>
    <property type="evidence" value="ECO:0000314"/>
    <property type="project" value="RGD"/>
</dbReference>
<dbReference type="GO" id="GO:0031894">
    <property type="term" value="F:V1A vasopressin receptor binding"/>
    <property type="evidence" value="ECO:0000318"/>
    <property type="project" value="GO_Central"/>
</dbReference>
<dbReference type="GO" id="GO:0042756">
    <property type="term" value="P:drinking behavior"/>
    <property type="evidence" value="ECO:0000314"/>
    <property type="project" value="RGD"/>
</dbReference>
<dbReference type="GO" id="GO:0042755">
    <property type="term" value="P:eating behavior"/>
    <property type="evidence" value="ECO:0000314"/>
    <property type="project" value="RGD"/>
</dbReference>
<dbReference type="GO" id="GO:0007565">
    <property type="term" value="P:female pregnancy"/>
    <property type="evidence" value="ECO:0000270"/>
    <property type="project" value="RGD"/>
</dbReference>
<dbReference type="GO" id="GO:0007625">
    <property type="term" value="P:grooming behavior"/>
    <property type="evidence" value="ECO:0000314"/>
    <property type="project" value="RGD"/>
</dbReference>
<dbReference type="GO" id="GO:0007507">
    <property type="term" value="P:heart development"/>
    <property type="evidence" value="ECO:0000270"/>
    <property type="project" value="RGD"/>
</dbReference>
<dbReference type="GO" id="GO:0007595">
    <property type="term" value="P:lactation"/>
    <property type="evidence" value="ECO:0000304"/>
    <property type="project" value="RGD"/>
</dbReference>
<dbReference type="GO" id="GO:0060179">
    <property type="term" value="P:male mating behavior"/>
    <property type="evidence" value="ECO:0000270"/>
    <property type="project" value="RGD"/>
</dbReference>
<dbReference type="GO" id="GO:0002125">
    <property type="term" value="P:maternal aggressive behavior"/>
    <property type="evidence" value="ECO:0000270"/>
    <property type="project" value="RGD"/>
</dbReference>
<dbReference type="GO" id="GO:0042711">
    <property type="term" value="P:maternal behavior"/>
    <property type="evidence" value="ECO:0000314"/>
    <property type="project" value="RGD"/>
</dbReference>
<dbReference type="GO" id="GO:0007613">
    <property type="term" value="P:memory"/>
    <property type="evidence" value="ECO:0000270"/>
    <property type="project" value="RGD"/>
</dbReference>
<dbReference type="GO" id="GO:0045776">
    <property type="term" value="P:negative regulation of blood pressure"/>
    <property type="evidence" value="ECO:0000315"/>
    <property type="project" value="RGD"/>
</dbReference>
<dbReference type="GO" id="GO:0035811">
    <property type="term" value="P:negative regulation of urine volume"/>
    <property type="evidence" value="ECO:0000314"/>
    <property type="project" value="RGD"/>
</dbReference>
<dbReference type="GO" id="GO:0007567">
    <property type="term" value="P:parturition"/>
    <property type="evidence" value="ECO:0000304"/>
    <property type="project" value="RGD"/>
</dbReference>
<dbReference type="GO" id="GO:0045777">
    <property type="term" value="P:positive regulation of blood pressure"/>
    <property type="evidence" value="ECO:0000314"/>
    <property type="project" value="RGD"/>
</dbReference>
<dbReference type="GO" id="GO:0120162">
    <property type="term" value="P:positive regulation of cold-induced thermogenesis"/>
    <property type="evidence" value="ECO:0000250"/>
    <property type="project" value="YuBioLab"/>
</dbReference>
<dbReference type="GO" id="GO:0007204">
    <property type="term" value="P:positive regulation of cytosolic calcium ion concentration"/>
    <property type="evidence" value="ECO:0000314"/>
    <property type="project" value="RGD"/>
</dbReference>
<dbReference type="GO" id="GO:0045925">
    <property type="term" value="P:positive regulation of female receptivity"/>
    <property type="evidence" value="ECO:0000314"/>
    <property type="project" value="RGD"/>
</dbReference>
<dbReference type="GO" id="GO:0060450">
    <property type="term" value="P:positive regulation of hindgut contraction"/>
    <property type="evidence" value="ECO:0000314"/>
    <property type="project" value="RGD"/>
</dbReference>
<dbReference type="GO" id="GO:0010701">
    <property type="term" value="P:positive regulation of norepinephrine secretion"/>
    <property type="evidence" value="ECO:0000314"/>
    <property type="project" value="RGD"/>
</dbReference>
<dbReference type="GO" id="GO:0045778">
    <property type="term" value="P:positive regulation of ossification"/>
    <property type="evidence" value="ECO:0000314"/>
    <property type="project" value="RGD"/>
</dbReference>
<dbReference type="GO" id="GO:0060406">
    <property type="term" value="P:positive regulation of penile erection"/>
    <property type="evidence" value="ECO:0000314"/>
    <property type="project" value="RGD"/>
</dbReference>
<dbReference type="GO" id="GO:0032308">
    <property type="term" value="P:positive regulation of prostaglandin secretion"/>
    <property type="evidence" value="ECO:0000314"/>
    <property type="project" value="RGD"/>
</dbReference>
<dbReference type="GO" id="GO:0051965">
    <property type="term" value="P:positive regulation of synapse assembly"/>
    <property type="evidence" value="ECO:0000314"/>
    <property type="project" value="RGD"/>
</dbReference>
<dbReference type="GO" id="GO:0050806">
    <property type="term" value="P:positive regulation of synaptic transmission"/>
    <property type="evidence" value="ECO:0000314"/>
    <property type="project" value="RGD"/>
</dbReference>
<dbReference type="GO" id="GO:0070474">
    <property type="term" value="P:positive regulation of uterine smooth muscle contraction"/>
    <property type="evidence" value="ECO:0000314"/>
    <property type="project" value="RGD"/>
</dbReference>
<dbReference type="GO" id="GO:0002027">
    <property type="term" value="P:regulation of heart rate"/>
    <property type="evidence" value="ECO:0000314"/>
    <property type="project" value="RGD"/>
</dbReference>
<dbReference type="GO" id="GO:0014823">
    <property type="term" value="P:response to activity"/>
    <property type="evidence" value="ECO:0000270"/>
    <property type="project" value="RGD"/>
</dbReference>
<dbReference type="GO" id="GO:0001975">
    <property type="term" value="P:response to amphetamine"/>
    <property type="evidence" value="ECO:0000270"/>
    <property type="project" value="RGD"/>
</dbReference>
<dbReference type="GO" id="GO:0051591">
    <property type="term" value="P:response to cAMP"/>
    <property type="evidence" value="ECO:0000270"/>
    <property type="project" value="RGD"/>
</dbReference>
<dbReference type="GO" id="GO:0042220">
    <property type="term" value="P:response to cocaine"/>
    <property type="evidence" value="ECO:0000270"/>
    <property type="project" value="RGD"/>
</dbReference>
<dbReference type="GO" id="GO:0051602">
    <property type="term" value="P:response to electrical stimulus"/>
    <property type="evidence" value="ECO:0000270"/>
    <property type="project" value="RGD"/>
</dbReference>
<dbReference type="GO" id="GO:0032355">
    <property type="term" value="P:response to estradiol"/>
    <property type="evidence" value="ECO:0000270"/>
    <property type="project" value="RGD"/>
</dbReference>
<dbReference type="GO" id="GO:0045472">
    <property type="term" value="P:response to ether"/>
    <property type="evidence" value="ECO:0000270"/>
    <property type="project" value="RGD"/>
</dbReference>
<dbReference type="GO" id="GO:0043207">
    <property type="term" value="P:response to external biotic stimulus"/>
    <property type="evidence" value="ECO:0000250"/>
    <property type="project" value="AgBase"/>
</dbReference>
<dbReference type="GO" id="GO:0032094">
    <property type="term" value="P:response to food"/>
    <property type="evidence" value="ECO:0000270"/>
    <property type="project" value="RGD"/>
</dbReference>
<dbReference type="GO" id="GO:0033595">
    <property type="term" value="P:response to genistein"/>
    <property type="evidence" value="ECO:0000270"/>
    <property type="project" value="RGD"/>
</dbReference>
<dbReference type="GO" id="GO:0051384">
    <property type="term" value="P:response to glucocorticoid"/>
    <property type="evidence" value="ECO:0000270"/>
    <property type="project" value="RGD"/>
</dbReference>
<dbReference type="GO" id="GO:0009612">
    <property type="term" value="P:response to mechanical stimulus"/>
    <property type="evidence" value="ECO:0000250"/>
    <property type="project" value="AgBase"/>
</dbReference>
<dbReference type="GO" id="GO:0043434">
    <property type="term" value="P:response to peptide hormone"/>
    <property type="evidence" value="ECO:0000270"/>
    <property type="project" value="RGD"/>
</dbReference>
<dbReference type="GO" id="GO:0032570">
    <property type="term" value="P:response to progesterone"/>
    <property type="evidence" value="ECO:0000314"/>
    <property type="project" value="RGD"/>
</dbReference>
<dbReference type="GO" id="GO:0034695">
    <property type="term" value="P:response to prostaglandin E"/>
    <property type="evidence" value="ECO:0000270"/>
    <property type="project" value="RGD"/>
</dbReference>
<dbReference type="GO" id="GO:0032526">
    <property type="term" value="P:response to retinoic acid"/>
    <property type="evidence" value="ECO:0000270"/>
    <property type="project" value="RGD"/>
</dbReference>
<dbReference type="GO" id="GO:0048545">
    <property type="term" value="P:response to steroid hormone"/>
    <property type="evidence" value="ECO:0000270"/>
    <property type="project" value="RGD"/>
</dbReference>
<dbReference type="GO" id="GO:0009744">
    <property type="term" value="P:response to sucrose"/>
    <property type="evidence" value="ECO:0000270"/>
    <property type="project" value="RGD"/>
</dbReference>
<dbReference type="GO" id="GO:0035176">
    <property type="term" value="P:social behavior"/>
    <property type="evidence" value="ECO:0000314"/>
    <property type="project" value="RGD"/>
</dbReference>
<dbReference type="GO" id="GO:0042713">
    <property type="term" value="P:sperm ejaculation"/>
    <property type="evidence" value="ECO:0000314"/>
    <property type="project" value="RGD"/>
</dbReference>
<dbReference type="FunFam" id="2.60.9.10:FF:000001">
    <property type="entry name" value="oxytocin-neurophysin 1"/>
    <property type="match status" value="1"/>
</dbReference>
<dbReference type="Gene3D" id="2.60.9.10">
    <property type="entry name" value="Neurohypophysial hormone domain"/>
    <property type="match status" value="1"/>
</dbReference>
<dbReference type="InterPro" id="IPR000981">
    <property type="entry name" value="Neurhyp_horm"/>
</dbReference>
<dbReference type="InterPro" id="IPR036387">
    <property type="entry name" value="Neurhyp_horm_dom_sf"/>
</dbReference>
<dbReference type="InterPro" id="IPR022423">
    <property type="entry name" value="Neurohypophysial_hormone_CS"/>
</dbReference>
<dbReference type="PANTHER" id="PTHR11681">
    <property type="entry name" value="NEUROPHYSIN"/>
    <property type="match status" value="1"/>
</dbReference>
<dbReference type="PANTHER" id="PTHR11681:SF2">
    <property type="entry name" value="OXYTOCIN-NEUROPHYSIN 1"/>
    <property type="match status" value="1"/>
</dbReference>
<dbReference type="Pfam" id="PF00220">
    <property type="entry name" value="Hormone_4"/>
    <property type="match status" value="1"/>
</dbReference>
<dbReference type="Pfam" id="PF00184">
    <property type="entry name" value="Hormone_5"/>
    <property type="match status" value="1"/>
</dbReference>
<dbReference type="PIRSF" id="PIRSF001815">
    <property type="entry name" value="Nonapeptide_hormone_precursor"/>
    <property type="match status" value="1"/>
</dbReference>
<dbReference type="PRINTS" id="PR00831">
    <property type="entry name" value="NEUROPHYSIN"/>
</dbReference>
<dbReference type="SMART" id="SM00003">
    <property type="entry name" value="NH"/>
    <property type="match status" value="1"/>
</dbReference>
<dbReference type="SUPFAM" id="SSF49606">
    <property type="entry name" value="Neurophysin II"/>
    <property type="match status" value="1"/>
</dbReference>
<dbReference type="PROSITE" id="PS00264">
    <property type="entry name" value="NEUROHYPOPHYS_HORM"/>
    <property type="match status" value="1"/>
</dbReference>
<proteinExistence type="evidence at protein level"/>
<comment type="function">
    <text>Neurophysin 1 specifically binds oxytocin.</text>
</comment>
<comment type="function">
    <text evidence="2">Oxytocin causes contraction of the smooth muscle of the uterus and of the mammary gland. Acts by binding to oxytocin receptor (OXTR) (By similarity).</text>
</comment>
<comment type="subunit">
    <text evidence="2">Interacts with oxytocin receptor (Ki=1.5 nM) (By similarity). Interacts with vasopressin V1aR/AVPR1A (Ki=37 nM), V1bR/AVPR1B (Ki=222 nM), and V2R/AVPR2 receptors (Ki=823 nM) (By similarity).</text>
</comment>
<comment type="similarity">
    <text evidence="4">Belongs to the vasopressin/oxytocin family.</text>
</comment>
<keyword id="KW-0027">Amidation</keyword>
<keyword id="KW-0165">Cleavage on pair of basic residues</keyword>
<keyword id="KW-0903">Direct protein sequencing</keyword>
<keyword id="KW-1015">Disulfide bond</keyword>
<keyword id="KW-0372">Hormone</keyword>
<keyword id="KW-1185">Reference proteome</keyword>
<keyword id="KW-0732">Signal</keyword>
<gene>
    <name type="primary">Oxt</name>
    <name type="synonym">Ot</name>
</gene>
<reference key="1">
    <citation type="journal article" date="1984" name="Proc. Natl. Acad. Sci. U.S.A.">
        <title>Structure and comparison of the oxytocin and vasopressin genes from rat.</title>
        <authorList>
            <person name="Ivell R."/>
            <person name="Richter D."/>
        </authorList>
    </citation>
    <scope>NUCLEOTIDE SEQUENCE [GENOMIC DNA]</scope>
</reference>
<reference key="2">
    <citation type="journal article" date="1986" name="Biol. Chem. Hoppe-Seyler">
        <title>The neurohypophyseal hormones vasopressin and oxytocin. Precursor structure, synthesis and regulation.</title>
        <authorList>
            <person name="Rehbein M."/>
            <person name="Hillers M."/>
            <person name="Mohr E."/>
            <person name="Ivell R."/>
            <person name="Morley S."/>
            <person name="Schmale H."/>
            <person name="Richter D."/>
        </authorList>
    </citation>
    <scope>NUCLEOTIDE SEQUENCE [MRNA]</scope>
</reference>
<reference key="3">
    <citation type="journal article" date="1988" name="FEBS Lett.">
        <title>Expression of the vasopressin and oxytocin genes in rats occurs in mutually exclusive sets of hypothalamic neurons.</title>
        <authorList>
            <person name="Mohr E."/>
            <person name="Bahnsen U."/>
            <person name="Kiessling C."/>
            <person name="Richter D."/>
        </authorList>
    </citation>
    <scope>NUCLEOTIDE SEQUENCE [GENOMIC DNA]</scope>
</reference>
<reference key="4">
    <citation type="journal article" date="1991" name="DNA Cell Biol.">
        <title>Rat vasopressin and oxytocin genes are linked by a long interspersed repeated DNA element (LINE): sequence and transcriptional analysis of LINE.</title>
        <authorList>
            <person name="Schmitz E."/>
            <person name="Mohr E."/>
            <person name="Richter D."/>
        </authorList>
    </citation>
    <scope>NUCLEOTIDE SEQUENCE [GENOMIC DNA]</scope>
    <source>
        <strain>Wistar</strain>
        <tissue>Liver</tissue>
    </source>
</reference>
<reference key="5">
    <citation type="journal article" date="1981" name="Biochem. Biophys. Res. Commun.">
        <title>Identification of rat neurophysins: complete amino acid sequences of MSEL- and VLDV-neurophysins.</title>
        <authorList>
            <person name="Chauvet M.-T."/>
            <person name="Chauvet J."/>
            <person name="Acher R."/>
        </authorList>
    </citation>
    <scope>PROTEIN SEQUENCE OF 32-125</scope>
</reference>
<reference key="6">
    <citation type="journal article" date="1981" name="FEBS Lett.">
        <title>Evolution of neurophysin proteins: partial amino acid sequences of rat neurophysins.</title>
        <authorList>
            <person name="North W.G."/>
            <person name="Mitchell T.I."/>
        </authorList>
    </citation>
    <scope>PROTEIN SEQUENCE OF 32-100</scope>
</reference>
<reference key="7">
    <citation type="journal article" date="1977" name="FEBS Lett.">
        <title>A comparative study of partial neurophysin protein sequences of cod, guinea pig, rat and sheep.</title>
        <authorList>
            <person name="Schlesinger D.H."/>
            <person name="Pickering B.T."/>
            <person name="Watkins W.B."/>
            <person name="Peek J.C."/>
            <person name="Moore L.G."/>
            <person name="Audhya T.K."/>
            <person name="Walter R."/>
        </authorList>
    </citation>
    <scope>PROTEIN SEQUENCE OF 32-64</scope>
</reference>
<reference key="8">
    <citation type="journal article" date="1971" name="Biochimie">
        <title>Evolution of neurohypophyseal hormones: isolation of active principles from rabbits and rats.</title>
        <authorList>
            <person name="Chauvet J."/>
            <person name="Chauvet M.-T."/>
            <person name="Acher R."/>
        </authorList>
    </citation>
    <scope>PROTEIN SEQUENCE OF 20-28</scope>
    <scope>AMIDATION AT GLY-28</scope>
</reference>
<protein>
    <recommendedName>
        <fullName>Oxytocin-neurophysin 1</fullName>
        <shortName>OT-NPI</shortName>
    </recommendedName>
    <component>
        <recommendedName>
            <fullName>Oxytocin</fullName>
        </recommendedName>
        <alternativeName>
            <fullName>Ocytocin</fullName>
        </alternativeName>
    </component>
    <component>
        <recommendedName>
            <fullName>Neurophysin 1</fullName>
        </recommendedName>
    </component>
</protein>
<evidence type="ECO:0000250" key="1">
    <source>
        <dbReference type="UniProtKB" id="P01175"/>
    </source>
</evidence>
<evidence type="ECO:0000250" key="2">
    <source>
        <dbReference type="UniProtKB" id="P01178"/>
    </source>
</evidence>
<evidence type="ECO:0000269" key="3">
    <source>
    </source>
</evidence>
<evidence type="ECO:0000305" key="4"/>
<feature type="signal peptide" evidence="3">
    <location>
        <begin position="1"/>
        <end position="19"/>
    </location>
</feature>
<feature type="peptide" id="PRO_0000020503" description="Oxytocin" evidence="3">
    <location>
        <begin position="20"/>
        <end position="28"/>
    </location>
</feature>
<feature type="chain" id="PRO_0000020504" description="Neurophysin 1">
    <location>
        <begin position="32"/>
        <end position="125"/>
    </location>
</feature>
<feature type="modified residue" description="Glycine amide" evidence="3">
    <location>
        <position position="28"/>
    </location>
</feature>
<feature type="disulfide bond" evidence="3">
    <location>
        <begin position="20"/>
        <end position="25"/>
    </location>
</feature>
<feature type="disulfide bond" evidence="1">
    <location>
        <begin position="41"/>
        <end position="85"/>
    </location>
</feature>
<feature type="disulfide bond" evidence="1">
    <location>
        <begin position="44"/>
        <end position="58"/>
    </location>
</feature>
<feature type="disulfide bond" evidence="1">
    <location>
        <begin position="52"/>
        <end position="75"/>
    </location>
</feature>
<feature type="disulfide bond" evidence="1">
    <location>
        <begin position="59"/>
        <end position="65"/>
    </location>
</feature>
<feature type="disulfide bond" evidence="1">
    <location>
        <begin position="92"/>
        <end position="104"/>
    </location>
</feature>
<feature type="disulfide bond" evidence="1">
    <location>
        <begin position="98"/>
        <end position="116"/>
    </location>
</feature>
<feature type="disulfide bond" evidence="1">
    <location>
        <begin position="105"/>
        <end position="110"/>
    </location>
</feature>
<feature type="sequence conflict" description="In Ref. 6; AA sequence." evidence="4" ref="6">
    <original>T</original>
    <variation>A</variation>
    <location>
        <position position="100"/>
    </location>
</feature>
<feature type="sequence conflict" description="In Ref. 5; AA sequence." evidence="4" ref="5">
    <original>ER</original>
    <variation>Q</variation>
    <location>
        <begin position="124"/>
        <end position="125"/>
    </location>
</feature>